<evidence type="ECO:0000250" key="1"/>
<evidence type="ECO:0000255" key="2"/>
<evidence type="ECO:0000255" key="3">
    <source>
        <dbReference type="PROSITE-ProRule" id="PRU00102"/>
    </source>
</evidence>
<evidence type="ECO:0000255" key="4">
    <source>
        <dbReference type="PROSITE-ProRule" id="PRU00284"/>
    </source>
</evidence>
<evidence type="ECO:0000305" key="5"/>
<organism>
    <name type="scientific">Sinorhizobium fredii (strain NBRC 101917 / NGR234)</name>
    <dbReference type="NCBI Taxonomy" id="394"/>
    <lineage>
        <taxon>Bacteria</taxon>
        <taxon>Pseudomonadati</taxon>
        <taxon>Pseudomonadota</taxon>
        <taxon>Alphaproteobacteria</taxon>
        <taxon>Hyphomicrobiales</taxon>
        <taxon>Rhizobiaceae</taxon>
        <taxon>Sinorhizobium/Ensifer group</taxon>
        <taxon>Sinorhizobium</taxon>
    </lineage>
</organism>
<accession>P55439</accession>
<dbReference type="EMBL" id="U00090">
    <property type="protein sequence ID" value="AAB91658.1"/>
    <property type="molecule type" value="Genomic_DNA"/>
</dbReference>
<dbReference type="RefSeq" id="NP_443846.1">
    <property type="nucleotide sequence ID" value="NC_000914.2"/>
</dbReference>
<dbReference type="RefSeq" id="WP_010875392.1">
    <property type="nucleotide sequence ID" value="NC_000914.2"/>
</dbReference>
<dbReference type="SMR" id="P55439"/>
<dbReference type="KEGG" id="rhi:NGR_a03800"/>
<dbReference type="PATRIC" id="fig|394.7.peg.389"/>
<dbReference type="eggNOG" id="COG0840">
    <property type="taxonomic scope" value="Bacteria"/>
</dbReference>
<dbReference type="eggNOG" id="COG2972">
    <property type="taxonomic scope" value="Bacteria"/>
</dbReference>
<dbReference type="HOGENOM" id="CLU_000445_64_0_5"/>
<dbReference type="OrthoDB" id="3378718at2"/>
<dbReference type="Proteomes" id="UP000001054">
    <property type="component" value="Plasmid pNGR234a"/>
</dbReference>
<dbReference type="GO" id="GO:0005886">
    <property type="term" value="C:plasma membrane"/>
    <property type="evidence" value="ECO:0007669"/>
    <property type="project" value="UniProtKB-SubCell"/>
</dbReference>
<dbReference type="GO" id="GO:0006935">
    <property type="term" value="P:chemotaxis"/>
    <property type="evidence" value="ECO:0007669"/>
    <property type="project" value="UniProtKB-KW"/>
</dbReference>
<dbReference type="GO" id="GO:0007165">
    <property type="term" value="P:signal transduction"/>
    <property type="evidence" value="ECO:0007669"/>
    <property type="project" value="UniProtKB-KW"/>
</dbReference>
<dbReference type="CDD" id="cd06225">
    <property type="entry name" value="HAMP"/>
    <property type="match status" value="1"/>
</dbReference>
<dbReference type="CDD" id="cd11386">
    <property type="entry name" value="MCP_signal"/>
    <property type="match status" value="1"/>
</dbReference>
<dbReference type="Gene3D" id="1.10.8.500">
    <property type="entry name" value="HAMP domain in histidine kinase"/>
    <property type="match status" value="1"/>
</dbReference>
<dbReference type="Gene3D" id="1.10.287.950">
    <property type="entry name" value="Methyl-accepting chemotaxis protein"/>
    <property type="match status" value="1"/>
</dbReference>
<dbReference type="InterPro" id="IPR003660">
    <property type="entry name" value="HAMP_dom"/>
</dbReference>
<dbReference type="InterPro" id="IPR051310">
    <property type="entry name" value="MCP_chemotaxis"/>
</dbReference>
<dbReference type="InterPro" id="IPR004089">
    <property type="entry name" value="MCPsignal_dom"/>
</dbReference>
<dbReference type="PANTHER" id="PTHR43531:SF11">
    <property type="entry name" value="METHYL-ACCEPTING CHEMOTAXIS PROTEIN 3"/>
    <property type="match status" value="1"/>
</dbReference>
<dbReference type="PANTHER" id="PTHR43531">
    <property type="entry name" value="PROTEIN ICFG"/>
    <property type="match status" value="1"/>
</dbReference>
<dbReference type="Pfam" id="PF00672">
    <property type="entry name" value="HAMP"/>
    <property type="match status" value="1"/>
</dbReference>
<dbReference type="Pfam" id="PF00015">
    <property type="entry name" value="MCPsignal"/>
    <property type="match status" value="1"/>
</dbReference>
<dbReference type="SMART" id="SM00304">
    <property type="entry name" value="HAMP"/>
    <property type="match status" value="2"/>
</dbReference>
<dbReference type="SMART" id="SM00283">
    <property type="entry name" value="MA"/>
    <property type="match status" value="1"/>
</dbReference>
<dbReference type="SUPFAM" id="SSF158472">
    <property type="entry name" value="HAMP domain-like"/>
    <property type="match status" value="1"/>
</dbReference>
<dbReference type="SUPFAM" id="SSF58104">
    <property type="entry name" value="Methyl-accepting chemotaxis protein (MCP) signaling domain"/>
    <property type="match status" value="1"/>
</dbReference>
<dbReference type="PROSITE" id="PS50111">
    <property type="entry name" value="CHEMOTAXIS_TRANSDUC_2"/>
    <property type="match status" value="1"/>
</dbReference>
<dbReference type="PROSITE" id="PS50885">
    <property type="entry name" value="HAMP"/>
    <property type="match status" value="2"/>
</dbReference>
<protein>
    <recommendedName>
        <fullName>Probable chemoreceptor y4fA</fullName>
    </recommendedName>
    <alternativeName>
        <fullName>Methyl-accepting chemotaxis protein</fullName>
    </alternativeName>
</protein>
<proteinExistence type="inferred from homology"/>
<name>Y4FA_SINFN</name>
<geneLocation type="plasmid">
    <name>sym pNGR234a</name>
</geneLocation>
<reference key="1">
    <citation type="journal article" date="1997" name="Nature">
        <title>Molecular basis of symbiosis between Rhizobium and legumes.</title>
        <authorList>
            <person name="Freiberg C.A."/>
            <person name="Fellay R."/>
            <person name="Bairoch A."/>
            <person name="Broughton W.J."/>
            <person name="Rosenthal A."/>
            <person name="Perret X."/>
        </authorList>
    </citation>
    <scope>NUCLEOTIDE SEQUENCE [LARGE SCALE GENOMIC DNA]</scope>
    <source>
        <strain>NBRC 101917 / NGR234</strain>
    </source>
</reference>
<reference key="2">
    <citation type="journal article" date="2009" name="Appl. Environ. Microbiol.">
        <title>Rhizobium sp. strain NGR234 possesses a remarkable number of secretion systems.</title>
        <authorList>
            <person name="Schmeisser C."/>
            <person name="Liesegang H."/>
            <person name="Krysciak D."/>
            <person name="Bakkou N."/>
            <person name="Le Quere A."/>
            <person name="Wollherr A."/>
            <person name="Heinemeyer I."/>
            <person name="Morgenstern B."/>
            <person name="Pommerening-Roeser A."/>
            <person name="Flores M."/>
            <person name="Palacios R."/>
            <person name="Brenner S."/>
            <person name="Gottschalk G."/>
            <person name="Schmitz R.A."/>
            <person name="Broughton W.J."/>
            <person name="Perret X."/>
            <person name="Strittmatter A.W."/>
            <person name="Streit W.R."/>
        </authorList>
    </citation>
    <scope>NUCLEOTIDE SEQUENCE [LARGE SCALE GENOMIC DNA]</scope>
    <source>
        <strain>NBRC 101917 / NGR234</strain>
    </source>
</reference>
<feature type="chain" id="PRO_0000110569" description="Probable chemoreceptor y4fA">
    <location>
        <begin position="1"/>
        <end position="845"/>
    </location>
</feature>
<feature type="transmembrane region" description="Helical" evidence="2">
    <location>
        <begin position="17"/>
        <end position="37"/>
    </location>
</feature>
<feature type="transmembrane region" description="Helical" evidence="2">
    <location>
        <begin position="430"/>
        <end position="450"/>
    </location>
</feature>
<feature type="domain" description="HAMP 1" evidence="3">
    <location>
        <begin position="451"/>
        <end position="502"/>
    </location>
</feature>
<feature type="domain" description="HAMP 2" evidence="3">
    <location>
        <begin position="530"/>
        <end position="582"/>
    </location>
</feature>
<feature type="domain" description="Methyl-accepting transducer" evidence="4">
    <location>
        <begin position="587"/>
        <end position="816"/>
    </location>
</feature>
<sequence length="845" mass="89611">MGWVDRLLSRFKIRTKVMLLVLPFILSISAVGVTGMLASGLLQSRMAISNDVAASLRGFKDVYAAMIGFLDQTTEENRALVFSKLDEQRAALDAAGARLTPKAEGWAELESASAALSAINGRMDDLWALHADEARLEAGIKEALGVISTSQADLLTAATAFDKSISTQEDDAKEKLRDAQRILSATSFVVALRDAFAARKDDGEGYRAIAAAMGDLKIHQKLLPIALPKKSKPLGKAFSANVRALSALVDDKARPPENIEKILDVFAELKALKEPLEAAATAKMQHVSTTFEELDASVAKAGLVMQDTRHLTDAIYLTRIALAEFMLDRSAEKQSTLAMHLAQCRNALFALSSTAGDLGFAGEQSTKLATSFDRIEQSAVELVGATGKRTQQFQAAADEIDHIGEQISLFADLQRSAAGRQSQDANRLSIGAMVLGVIIALVSGAALVLTLKGPIGEITQTMRNLAGGLLDTAVANRNRADEIGEMARALDVFKTNAKARIALEQRSEQERVAAHAERERNEAEKLRRDQEIAFAVDALADGLDAMAKGRLTSTIETPFAPALDKLRTDFNAAVAGLRQTLLDIRTTSSVIQGSGRQMAEGAKALSGRTEQQAASLEETAASVDEIVATIRRAGDQAANADNTVSKAKQDADRSTVVVGNATAAMGRIEAASSHIGHIIEVIDDIAFQINLLALNAGIEAARAGEAGKGFAVVAQEVRELAQRSAGAAREIAALIGNSTAEVAKGAGLVSETGAALLDISKHILEISTQIEAIALSSREQASSIAEVNVAITRLDQLTQSNAAMAEETQAASWTLSGEADYLMQLVDRFDLGENSGSASETMKAA</sequence>
<gene>
    <name type="ordered locus">NGR_a03800</name>
    <name type="ORF">y4fA</name>
</gene>
<keyword id="KW-1003">Cell membrane</keyword>
<keyword id="KW-0145">Chemotaxis</keyword>
<keyword id="KW-0472">Membrane</keyword>
<keyword id="KW-0488">Methylation</keyword>
<keyword id="KW-0614">Plasmid</keyword>
<keyword id="KW-1185">Reference proteome</keyword>
<keyword id="KW-0677">Repeat</keyword>
<keyword id="KW-0807">Transducer</keyword>
<keyword id="KW-0812">Transmembrane</keyword>
<keyword id="KW-1133">Transmembrane helix</keyword>
<comment type="function">
    <text evidence="1">Chemotactic-signal transducers respond to changes in the concentration of attractants and repellents in the environment, transduce a signal from the outside to the inside of the cell, and facilitate sensory adaptation through the variation of the level of methylation. Attractants increase the level of methylation while repellents decrease the level of methylation (By similarity).</text>
</comment>
<comment type="subcellular location">
    <subcellularLocation>
        <location evidence="5">Cell membrane</location>
        <topology evidence="5">Multi-pass membrane protein</topology>
    </subcellularLocation>
</comment>
<comment type="similarity">
    <text evidence="5">Belongs to the methyl-accepting chemotaxis (MCP) protein family.</text>
</comment>